<sequence length="878" mass="97280">MKHLTSAEVRQMFLDFFKEKGHAVEPSASLVPHEDPSLLWINSGVATLKKYFDGRVVPENPRIVNAQKAIRTNDIENVGKTARHHTFFEMLGNFSIGDYFKEEAITWAWEFLTSDKWIGFDKELLSVTVHPEDEEAYEFWAKKIGIPEERIIRLEGNFWDIGEGPSGPNTEIFYDRGEAYGNDPEDPELYPGGENDRYLEVWNLVFSEFNHNPDGTYTPLPKKNIDTGMGLERMVSVIQNVPTNFDTDLFVPIIKATESISGETYGKDNVKDTAFKVIADHIRTVAFAVSDGALPSNEGRGYVLRRLLRRAVRYAKTINIHRPFMFDLVPVVAEIMADFYPEVKEKADFIAKVIKTEEERFHETLNEGLAILSEMIKKEKDKGSSVISGADVFKLYDTYGFPVELTEEYAEDENMTVDHEGFEEEMNQQRERARNARQDVGSMQVQGGALRDVTVESTFVGYSQTKADANIIVLLQDGQLIEEAHEGESVQIILDETPFYAESGGQIGDKGYLRSEQAVVRIKDVQKAPNGQHVHEGVVESGTVQKGLHVTAEVEDHMRSGVIKNHTATHLLHQALKDVLGTHVNQAGSLVTENRLRFDFSHFGQVTKEELEQIERIVNEKIWASIPVSIDLKPIAEAKEMGAMALFGEKYGDIVRVVQVGDYSLELCGGCHVRNTAEIGLFKIVSESGIGAGTRRIEAVTGQGAYVEMNSQISVLKQTADELKTNIKEVPKRVAALQAELKDAQRENESLLAKLGNVEAGAILSKVKEVDGVNVLAAKVNAKDMNHLRTMVDELKAKLGSAVIVLGAVQNDKVNISAGVTKDLIEKGLHAGKLVKQAAEVCGGGGGGRPDMAQAGGKQPEKLEEALASVEDWVKSVL</sequence>
<comment type="function">
    <text evidence="1">Catalyzes the attachment of alanine to tRNA(Ala) in a two-step reaction: alanine is first activated by ATP to form Ala-AMP and then transferred to the acceptor end of tRNA(Ala). Also edits incorrectly charged Ser-tRNA(Ala) and Gly-tRNA(Ala) via its editing domain.</text>
</comment>
<comment type="catalytic activity">
    <reaction evidence="1">
        <text>tRNA(Ala) + L-alanine + ATP = L-alanyl-tRNA(Ala) + AMP + diphosphate</text>
        <dbReference type="Rhea" id="RHEA:12540"/>
        <dbReference type="Rhea" id="RHEA-COMP:9657"/>
        <dbReference type="Rhea" id="RHEA-COMP:9923"/>
        <dbReference type="ChEBI" id="CHEBI:30616"/>
        <dbReference type="ChEBI" id="CHEBI:33019"/>
        <dbReference type="ChEBI" id="CHEBI:57972"/>
        <dbReference type="ChEBI" id="CHEBI:78442"/>
        <dbReference type="ChEBI" id="CHEBI:78497"/>
        <dbReference type="ChEBI" id="CHEBI:456215"/>
        <dbReference type="EC" id="6.1.1.7"/>
    </reaction>
</comment>
<comment type="cofactor">
    <cofactor evidence="1">
        <name>Zn(2+)</name>
        <dbReference type="ChEBI" id="CHEBI:29105"/>
    </cofactor>
    <text evidence="1">Binds 1 zinc ion per subunit.</text>
</comment>
<comment type="subcellular location">
    <subcellularLocation>
        <location evidence="1">Cytoplasm</location>
    </subcellularLocation>
</comment>
<comment type="domain">
    <text evidence="1">Consists of three domains; the N-terminal catalytic domain, the editing domain and the C-terminal C-Ala domain. The editing domain removes incorrectly charged amino acids, while the C-Ala domain, along with tRNA(Ala), serves as a bridge to cooperatively bring together the editing and aminoacylation centers thus stimulating deacylation of misacylated tRNAs.</text>
</comment>
<comment type="similarity">
    <text evidence="1">Belongs to the class-II aminoacyl-tRNA synthetase family.</text>
</comment>
<proteinExistence type="inferred from homology"/>
<evidence type="ECO:0000255" key="1">
    <source>
        <dbReference type="HAMAP-Rule" id="MF_00036"/>
    </source>
</evidence>
<reference key="1">
    <citation type="journal article" date="1997" name="Nature">
        <title>The complete genome sequence of the Gram-positive bacterium Bacillus subtilis.</title>
        <authorList>
            <person name="Kunst F."/>
            <person name="Ogasawara N."/>
            <person name="Moszer I."/>
            <person name="Albertini A.M."/>
            <person name="Alloni G."/>
            <person name="Azevedo V."/>
            <person name="Bertero M.G."/>
            <person name="Bessieres P."/>
            <person name="Bolotin A."/>
            <person name="Borchert S."/>
            <person name="Borriss R."/>
            <person name="Boursier L."/>
            <person name="Brans A."/>
            <person name="Braun M."/>
            <person name="Brignell S.C."/>
            <person name="Bron S."/>
            <person name="Brouillet S."/>
            <person name="Bruschi C.V."/>
            <person name="Caldwell B."/>
            <person name="Capuano V."/>
            <person name="Carter N.M."/>
            <person name="Choi S.-K."/>
            <person name="Codani J.-J."/>
            <person name="Connerton I.F."/>
            <person name="Cummings N.J."/>
            <person name="Daniel R.A."/>
            <person name="Denizot F."/>
            <person name="Devine K.M."/>
            <person name="Duesterhoeft A."/>
            <person name="Ehrlich S.D."/>
            <person name="Emmerson P.T."/>
            <person name="Entian K.-D."/>
            <person name="Errington J."/>
            <person name="Fabret C."/>
            <person name="Ferrari E."/>
            <person name="Foulger D."/>
            <person name="Fritz C."/>
            <person name="Fujita M."/>
            <person name="Fujita Y."/>
            <person name="Fuma S."/>
            <person name="Galizzi A."/>
            <person name="Galleron N."/>
            <person name="Ghim S.-Y."/>
            <person name="Glaser P."/>
            <person name="Goffeau A."/>
            <person name="Golightly E.J."/>
            <person name="Grandi G."/>
            <person name="Guiseppi G."/>
            <person name="Guy B.J."/>
            <person name="Haga K."/>
            <person name="Haiech J."/>
            <person name="Harwood C.R."/>
            <person name="Henaut A."/>
            <person name="Hilbert H."/>
            <person name="Holsappel S."/>
            <person name="Hosono S."/>
            <person name="Hullo M.-F."/>
            <person name="Itaya M."/>
            <person name="Jones L.-M."/>
            <person name="Joris B."/>
            <person name="Karamata D."/>
            <person name="Kasahara Y."/>
            <person name="Klaerr-Blanchard M."/>
            <person name="Klein C."/>
            <person name="Kobayashi Y."/>
            <person name="Koetter P."/>
            <person name="Koningstein G."/>
            <person name="Krogh S."/>
            <person name="Kumano M."/>
            <person name="Kurita K."/>
            <person name="Lapidus A."/>
            <person name="Lardinois S."/>
            <person name="Lauber J."/>
            <person name="Lazarevic V."/>
            <person name="Lee S.-M."/>
            <person name="Levine A."/>
            <person name="Liu H."/>
            <person name="Masuda S."/>
            <person name="Mauel C."/>
            <person name="Medigue C."/>
            <person name="Medina N."/>
            <person name="Mellado R.P."/>
            <person name="Mizuno M."/>
            <person name="Moestl D."/>
            <person name="Nakai S."/>
            <person name="Noback M."/>
            <person name="Noone D."/>
            <person name="O'Reilly M."/>
            <person name="Ogawa K."/>
            <person name="Ogiwara A."/>
            <person name="Oudega B."/>
            <person name="Park S.-H."/>
            <person name="Parro V."/>
            <person name="Pohl T.M."/>
            <person name="Portetelle D."/>
            <person name="Porwollik S."/>
            <person name="Prescott A.M."/>
            <person name="Presecan E."/>
            <person name="Pujic P."/>
            <person name="Purnelle B."/>
            <person name="Rapoport G."/>
            <person name="Rey M."/>
            <person name="Reynolds S."/>
            <person name="Rieger M."/>
            <person name="Rivolta C."/>
            <person name="Rocha E."/>
            <person name="Roche B."/>
            <person name="Rose M."/>
            <person name="Sadaie Y."/>
            <person name="Sato T."/>
            <person name="Scanlan E."/>
            <person name="Schleich S."/>
            <person name="Schroeter R."/>
            <person name="Scoffone F."/>
            <person name="Sekiguchi J."/>
            <person name="Sekowska A."/>
            <person name="Seror S.J."/>
            <person name="Serror P."/>
            <person name="Shin B.-S."/>
            <person name="Soldo B."/>
            <person name="Sorokin A."/>
            <person name="Tacconi E."/>
            <person name="Takagi T."/>
            <person name="Takahashi H."/>
            <person name="Takemaru K."/>
            <person name="Takeuchi M."/>
            <person name="Tamakoshi A."/>
            <person name="Tanaka T."/>
            <person name="Terpstra P."/>
            <person name="Tognoni A."/>
            <person name="Tosato V."/>
            <person name="Uchiyama S."/>
            <person name="Vandenbol M."/>
            <person name="Vannier F."/>
            <person name="Vassarotti A."/>
            <person name="Viari A."/>
            <person name="Wambutt R."/>
            <person name="Wedler E."/>
            <person name="Wedler H."/>
            <person name="Weitzenegger T."/>
            <person name="Winters P."/>
            <person name="Wipat A."/>
            <person name="Yamamoto H."/>
            <person name="Yamane K."/>
            <person name="Yasumoto K."/>
            <person name="Yata K."/>
            <person name="Yoshida K."/>
            <person name="Yoshikawa H.-F."/>
            <person name="Zumstein E."/>
            <person name="Yoshikawa H."/>
            <person name="Danchin A."/>
        </authorList>
    </citation>
    <scope>NUCLEOTIDE SEQUENCE [LARGE SCALE GENOMIC DNA]</scope>
    <source>
        <strain>168</strain>
    </source>
</reference>
<organism>
    <name type="scientific">Bacillus subtilis (strain 168)</name>
    <dbReference type="NCBI Taxonomy" id="224308"/>
    <lineage>
        <taxon>Bacteria</taxon>
        <taxon>Bacillati</taxon>
        <taxon>Bacillota</taxon>
        <taxon>Bacilli</taxon>
        <taxon>Bacillales</taxon>
        <taxon>Bacillaceae</taxon>
        <taxon>Bacillus</taxon>
    </lineage>
</organism>
<gene>
    <name evidence="1" type="primary">alaS</name>
    <name type="ordered locus">BSU27410</name>
</gene>
<protein>
    <recommendedName>
        <fullName evidence="1">Alanine--tRNA ligase</fullName>
        <ecNumber evidence="1">6.1.1.7</ecNumber>
    </recommendedName>
    <alternativeName>
        <fullName evidence="1">Alanyl-tRNA synthetase</fullName>
        <shortName evidence="1">AlaRS</shortName>
    </alternativeName>
</protein>
<dbReference type="EC" id="6.1.1.7" evidence="1"/>
<dbReference type="EMBL" id="AL009126">
    <property type="protein sequence ID" value="CAB14682.1"/>
    <property type="molecule type" value="Genomic_DNA"/>
</dbReference>
<dbReference type="PIR" id="A69584">
    <property type="entry name" value="A69584"/>
</dbReference>
<dbReference type="RefSeq" id="NP_390618.1">
    <property type="nucleotide sequence ID" value="NC_000964.3"/>
</dbReference>
<dbReference type="RefSeq" id="WP_003246158.1">
    <property type="nucleotide sequence ID" value="NZ_OZ025638.1"/>
</dbReference>
<dbReference type="SMR" id="O34526"/>
<dbReference type="FunCoup" id="O34526">
    <property type="interactions" value="755"/>
</dbReference>
<dbReference type="STRING" id="224308.BSU27410"/>
<dbReference type="jPOST" id="O34526"/>
<dbReference type="PaxDb" id="224308-BSU27410"/>
<dbReference type="EnsemblBacteria" id="CAB14682">
    <property type="protein sequence ID" value="CAB14682"/>
    <property type="gene ID" value="BSU_27410"/>
</dbReference>
<dbReference type="GeneID" id="939643"/>
<dbReference type="KEGG" id="bsu:BSU27410"/>
<dbReference type="PATRIC" id="fig|224308.179.peg.2977"/>
<dbReference type="eggNOG" id="COG0013">
    <property type="taxonomic scope" value="Bacteria"/>
</dbReference>
<dbReference type="InParanoid" id="O34526"/>
<dbReference type="OrthoDB" id="9803884at2"/>
<dbReference type="PhylomeDB" id="O34526"/>
<dbReference type="BioCyc" id="BSUB:BSU27410-MONOMER"/>
<dbReference type="Proteomes" id="UP000001570">
    <property type="component" value="Chromosome"/>
</dbReference>
<dbReference type="GO" id="GO:0005829">
    <property type="term" value="C:cytosol"/>
    <property type="evidence" value="ECO:0000318"/>
    <property type="project" value="GO_Central"/>
</dbReference>
<dbReference type="GO" id="GO:0004813">
    <property type="term" value="F:alanine-tRNA ligase activity"/>
    <property type="evidence" value="ECO:0000318"/>
    <property type="project" value="GO_Central"/>
</dbReference>
<dbReference type="GO" id="GO:0002161">
    <property type="term" value="F:aminoacyl-tRNA deacylase activity"/>
    <property type="evidence" value="ECO:0000318"/>
    <property type="project" value="GO_Central"/>
</dbReference>
<dbReference type="GO" id="GO:0005524">
    <property type="term" value="F:ATP binding"/>
    <property type="evidence" value="ECO:0007669"/>
    <property type="project" value="UniProtKB-UniRule"/>
</dbReference>
<dbReference type="GO" id="GO:0140096">
    <property type="term" value="F:catalytic activity, acting on a protein"/>
    <property type="evidence" value="ECO:0007669"/>
    <property type="project" value="UniProtKB-ARBA"/>
</dbReference>
<dbReference type="GO" id="GO:0016740">
    <property type="term" value="F:transferase activity"/>
    <property type="evidence" value="ECO:0007669"/>
    <property type="project" value="UniProtKB-ARBA"/>
</dbReference>
<dbReference type="GO" id="GO:0000049">
    <property type="term" value="F:tRNA binding"/>
    <property type="evidence" value="ECO:0007669"/>
    <property type="project" value="UniProtKB-KW"/>
</dbReference>
<dbReference type="GO" id="GO:0008270">
    <property type="term" value="F:zinc ion binding"/>
    <property type="evidence" value="ECO:0007669"/>
    <property type="project" value="UniProtKB-UniRule"/>
</dbReference>
<dbReference type="GO" id="GO:0006419">
    <property type="term" value="P:alanyl-tRNA aminoacylation"/>
    <property type="evidence" value="ECO:0000318"/>
    <property type="project" value="GO_Central"/>
</dbReference>
<dbReference type="CDD" id="cd00673">
    <property type="entry name" value="AlaRS_core"/>
    <property type="match status" value="1"/>
</dbReference>
<dbReference type="FunFam" id="2.40.30.130:FF:000001">
    <property type="entry name" value="Alanine--tRNA ligase"/>
    <property type="match status" value="1"/>
</dbReference>
<dbReference type="FunFam" id="3.10.310.40:FF:000001">
    <property type="entry name" value="Alanine--tRNA ligase"/>
    <property type="match status" value="1"/>
</dbReference>
<dbReference type="FunFam" id="3.30.54.20:FF:000001">
    <property type="entry name" value="Alanine--tRNA ligase"/>
    <property type="match status" value="1"/>
</dbReference>
<dbReference type="FunFam" id="3.30.930.10:FF:000046">
    <property type="entry name" value="Alanine--tRNA ligase"/>
    <property type="match status" value="1"/>
</dbReference>
<dbReference type="FunFam" id="3.30.980.10:FF:000004">
    <property type="entry name" value="Alanine--tRNA ligase, cytoplasmic"/>
    <property type="match status" value="1"/>
</dbReference>
<dbReference type="Gene3D" id="2.40.30.130">
    <property type="match status" value="1"/>
</dbReference>
<dbReference type="Gene3D" id="3.10.310.40">
    <property type="match status" value="1"/>
</dbReference>
<dbReference type="Gene3D" id="3.30.54.20">
    <property type="match status" value="1"/>
</dbReference>
<dbReference type="Gene3D" id="6.10.250.550">
    <property type="match status" value="1"/>
</dbReference>
<dbReference type="Gene3D" id="3.30.930.10">
    <property type="entry name" value="Bira Bifunctional Protein, Domain 2"/>
    <property type="match status" value="1"/>
</dbReference>
<dbReference type="Gene3D" id="3.30.980.10">
    <property type="entry name" value="Threonyl-trna Synthetase, Chain A, domain 2"/>
    <property type="match status" value="1"/>
</dbReference>
<dbReference type="HAMAP" id="MF_00036_B">
    <property type="entry name" value="Ala_tRNA_synth_B"/>
    <property type="match status" value="1"/>
</dbReference>
<dbReference type="InterPro" id="IPR045864">
    <property type="entry name" value="aa-tRNA-synth_II/BPL/LPL"/>
</dbReference>
<dbReference type="InterPro" id="IPR002318">
    <property type="entry name" value="Ala-tRNA-lgiase_IIc"/>
</dbReference>
<dbReference type="InterPro" id="IPR018162">
    <property type="entry name" value="Ala-tRNA-ligase_IIc_anticod-bd"/>
</dbReference>
<dbReference type="InterPro" id="IPR018165">
    <property type="entry name" value="Ala-tRNA-synth_IIc_core"/>
</dbReference>
<dbReference type="InterPro" id="IPR018164">
    <property type="entry name" value="Ala-tRNA-synth_IIc_N"/>
</dbReference>
<dbReference type="InterPro" id="IPR050058">
    <property type="entry name" value="Ala-tRNA_ligase"/>
</dbReference>
<dbReference type="InterPro" id="IPR023033">
    <property type="entry name" value="Ala_tRNA_ligase_euk/bac"/>
</dbReference>
<dbReference type="InterPro" id="IPR003156">
    <property type="entry name" value="DHHA1_dom"/>
</dbReference>
<dbReference type="InterPro" id="IPR018163">
    <property type="entry name" value="Thr/Ala-tRNA-synth_IIc_edit"/>
</dbReference>
<dbReference type="InterPro" id="IPR009000">
    <property type="entry name" value="Transl_B-barrel_sf"/>
</dbReference>
<dbReference type="InterPro" id="IPR012947">
    <property type="entry name" value="tRNA_SAD"/>
</dbReference>
<dbReference type="NCBIfam" id="TIGR00344">
    <property type="entry name" value="alaS"/>
    <property type="match status" value="1"/>
</dbReference>
<dbReference type="PANTHER" id="PTHR11777:SF9">
    <property type="entry name" value="ALANINE--TRNA LIGASE, CYTOPLASMIC"/>
    <property type="match status" value="1"/>
</dbReference>
<dbReference type="PANTHER" id="PTHR11777">
    <property type="entry name" value="ALANYL-TRNA SYNTHETASE"/>
    <property type="match status" value="1"/>
</dbReference>
<dbReference type="Pfam" id="PF02272">
    <property type="entry name" value="DHHA1"/>
    <property type="match status" value="1"/>
</dbReference>
<dbReference type="Pfam" id="PF01411">
    <property type="entry name" value="tRNA-synt_2c"/>
    <property type="match status" value="1"/>
</dbReference>
<dbReference type="Pfam" id="PF07973">
    <property type="entry name" value="tRNA_SAD"/>
    <property type="match status" value="1"/>
</dbReference>
<dbReference type="PRINTS" id="PR00980">
    <property type="entry name" value="TRNASYNTHALA"/>
</dbReference>
<dbReference type="SMART" id="SM00863">
    <property type="entry name" value="tRNA_SAD"/>
    <property type="match status" value="1"/>
</dbReference>
<dbReference type="SUPFAM" id="SSF55681">
    <property type="entry name" value="Class II aaRS and biotin synthetases"/>
    <property type="match status" value="1"/>
</dbReference>
<dbReference type="SUPFAM" id="SSF101353">
    <property type="entry name" value="Putative anticodon-binding domain of alanyl-tRNA synthetase (AlaRS)"/>
    <property type="match status" value="1"/>
</dbReference>
<dbReference type="SUPFAM" id="SSF55186">
    <property type="entry name" value="ThrRS/AlaRS common domain"/>
    <property type="match status" value="1"/>
</dbReference>
<dbReference type="SUPFAM" id="SSF50447">
    <property type="entry name" value="Translation proteins"/>
    <property type="match status" value="1"/>
</dbReference>
<dbReference type="PROSITE" id="PS50860">
    <property type="entry name" value="AA_TRNA_LIGASE_II_ALA"/>
    <property type="match status" value="1"/>
</dbReference>
<accession>O34526</accession>
<keyword id="KW-0030">Aminoacyl-tRNA synthetase</keyword>
<keyword id="KW-0067">ATP-binding</keyword>
<keyword id="KW-0963">Cytoplasm</keyword>
<keyword id="KW-0436">Ligase</keyword>
<keyword id="KW-0479">Metal-binding</keyword>
<keyword id="KW-0547">Nucleotide-binding</keyword>
<keyword id="KW-0648">Protein biosynthesis</keyword>
<keyword id="KW-1185">Reference proteome</keyword>
<keyword id="KW-0694">RNA-binding</keyword>
<keyword id="KW-0820">tRNA-binding</keyword>
<keyword id="KW-0862">Zinc</keyword>
<name>SYA_BACSU</name>
<feature type="chain" id="PRO_0000075057" description="Alanine--tRNA ligase">
    <location>
        <begin position="1"/>
        <end position="878"/>
    </location>
</feature>
<feature type="binding site" evidence="1">
    <location>
        <position position="566"/>
    </location>
    <ligand>
        <name>Zn(2+)</name>
        <dbReference type="ChEBI" id="CHEBI:29105"/>
    </ligand>
</feature>
<feature type="binding site" evidence="1">
    <location>
        <position position="570"/>
    </location>
    <ligand>
        <name>Zn(2+)</name>
        <dbReference type="ChEBI" id="CHEBI:29105"/>
    </ligand>
</feature>
<feature type="binding site" evidence="1">
    <location>
        <position position="668"/>
    </location>
    <ligand>
        <name>Zn(2+)</name>
        <dbReference type="ChEBI" id="CHEBI:29105"/>
    </ligand>
</feature>
<feature type="binding site" evidence="1">
    <location>
        <position position="672"/>
    </location>
    <ligand>
        <name>Zn(2+)</name>
        <dbReference type="ChEBI" id="CHEBI:29105"/>
    </ligand>
</feature>